<accession>A0A1B0GSN8</accession>
<evidence type="ECO:0000255" key="1"/>
<evidence type="ECO:0000312" key="2">
    <source>
        <dbReference type="MGI" id="MGI:2442684"/>
    </source>
</evidence>
<name>SRTM2_MOUSE</name>
<comment type="subcellular location">
    <subcellularLocation>
        <location evidence="1">Membrane</location>
        <topology evidence="1">Single-pass membrane protein</topology>
    </subcellularLocation>
</comment>
<proteinExistence type="inferred from homology"/>
<keyword id="KW-0325">Glycoprotein</keyword>
<keyword id="KW-0472">Membrane</keyword>
<keyword id="KW-1185">Reference proteome</keyword>
<keyword id="KW-0812">Transmembrane</keyword>
<keyword id="KW-1133">Transmembrane helix</keyword>
<sequence length="89" mass="10093">MTEVLFKYHGNLTGRAHFPTLATEADTTSDKYSNLYMYVGLFLSLLAILLILLFTMLLRLKHVISPITESTESVPQFTDVEMQSRIPTP</sequence>
<dbReference type="EMBL" id="AK039668">
    <property type="status" value="NOT_ANNOTATED_CDS"/>
    <property type="molecule type" value="mRNA"/>
</dbReference>
<dbReference type="EMBL" id="AL713894">
    <property type="status" value="NOT_ANNOTATED_CDS"/>
    <property type="molecule type" value="Genomic_DNA"/>
</dbReference>
<dbReference type="CCDS" id="CCDS90758.1"/>
<dbReference type="SMR" id="A0A1B0GSN8"/>
<dbReference type="FunCoup" id="A0A1B0GSN8">
    <property type="interactions" value="376"/>
</dbReference>
<dbReference type="GlyCosmos" id="A0A1B0GSN8">
    <property type="glycosylation" value="1 site, No reported glycans"/>
</dbReference>
<dbReference type="GlyGen" id="A0A1B0GSN8">
    <property type="glycosylation" value="1 site"/>
</dbReference>
<dbReference type="Ensembl" id="ENSMUST00000135687.2">
    <property type="protein sequence ID" value="ENSMUSP00000148011.2"/>
    <property type="gene ID" value="ENSMUSG00000085139.2"/>
</dbReference>
<dbReference type="AGR" id="MGI:2442684"/>
<dbReference type="MGI" id="MGI:2442684">
    <property type="gene designation" value="Sertm2"/>
</dbReference>
<dbReference type="VEuPathDB" id="HostDB:ENSMUSG00000085139"/>
<dbReference type="GeneTree" id="ENSGT00950000183232"/>
<dbReference type="InParanoid" id="A0A1B0GSN8"/>
<dbReference type="OMA" id="TDVEMHS"/>
<dbReference type="OrthoDB" id="9903474at2759"/>
<dbReference type="PRO" id="PR:A0A1B0GSN8"/>
<dbReference type="Proteomes" id="UP000000589">
    <property type="component" value="Chromosome X"/>
</dbReference>
<dbReference type="RNAct" id="A0A1B0GSN8">
    <property type="molecule type" value="protein"/>
</dbReference>
<dbReference type="Bgee" id="ENSMUSG00000085139">
    <property type="expression patterns" value="Expressed in retinal neural layer and 18 other cell types or tissues"/>
</dbReference>
<dbReference type="GO" id="GO:0016020">
    <property type="term" value="C:membrane"/>
    <property type="evidence" value="ECO:0007669"/>
    <property type="project" value="UniProtKB-SubCell"/>
</dbReference>
<dbReference type="InterPro" id="IPR031741">
    <property type="entry name" value="SERTM"/>
</dbReference>
<dbReference type="PANTHER" id="PTHR35660:SF2">
    <property type="entry name" value="SERINE-RICH AND TRANSMEMBRANE DOMAIN-CONTAINING 2"/>
    <property type="match status" value="1"/>
</dbReference>
<dbReference type="PANTHER" id="PTHR35660">
    <property type="entry name" value="SERINE-RICH AND TRANSMEMBRANE DOMAIN-CONTAINING PROTEIN 1"/>
    <property type="match status" value="1"/>
</dbReference>
<dbReference type="Pfam" id="PF15872">
    <property type="entry name" value="SRTM1"/>
    <property type="match status" value="1"/>
</dbReference>
<gene>
    <name evidence="2" type="primary">SERTM2</name>
</gene>
<reference key="1">
    <citation type="journal article" date="2005" name="Science">
        <title>The transcriptional landscape of the mammalian genome.</title>
        <authorList>
            <person name="Carninci P."/>
            <person name="Kasukawa T."/>
            <person name="Katayama S."/>
            <person name="Gough J."/>
            <person name="Frith M.C."/>
            <person name="Maeda N."/>
            <person name="Oyama R."/>
            <person name="Ravasi T."/>
            <person name="Lenhard B."/>
            <person name="Wells C."/>
            <person name="Kodzius R."/>
            <person name="Shimokawa K."/>
            <person name="Bajic V.B."/>
            <person name="Brenner S.E."/>
            <person name="Batalov S."/>
            <person name="Forrest A.R."/>
            <person name="Zavolan M."/>
            <person name="Davis M.J."/>
            <person name="Wilming L.G."/>
            <person name="Aidinis V."/>
            <person name="Allen J.E."/>
            <person name="Ambesi-Impiombato A."/>
            <person name="Apweiler R."/>
            <person name="Aturaliya R.N."/>
            <person name="Bailey T.L."/>
            <person name="Bansal M."/>
            <person name="Baxter L."/>
            <person name="Beisel K.W."/>
            <person name="Bersano T."/>
            <person name="Bono H."/>
            <person name="Chalk A.M."/>
            <person name="Chiu K.P."/>
            <person name="Choudhary V."/>
            <person name="Christoffels A."/>
            <person name="Clutterbuck D.R."/>
            <person name="Crowe M.L."/>
            <person name="Dalla E."/>
            <person name="Dalrymple B.P."/>
            <person name="de Bono B."/>
            <person name="Della Gatta G."/>
            <person name="di Bernardo D."/>
            <person name="Down T."/>
            <person name="Engstrom P."/>
            <person name="Fagiolini M."/>
            <person name="Faulkner G."/>
            <person name="Fletcher C.F."/>
            <person name="Fukushima T."/>
            <person name="Furuno M."/>
            <person name="Futaki S."/>
            <person name="Gariboldi M."/>
            <person name="Georgii-Hemming P."/>
            <person name="Gingeras T.R."/>
            <person name="Gojobori T."/>
            <person name="Green R.E."/>
            <person name="Gustincich S."/>
            <person name="Harbers M."/>
            <person name="Hayashi Y."/>
            <person name="Hensch T.K."/>
            <person name="Hirokawa N."/>
            <person name="Hill D."/>
            <person name="Huminiecki L."/>
            <person name="Iacono M."/>
            <person name="Ikeo K."/>
            <person name="Iwama A."/>
            <person name="Ishikawa T."/>
            <person name="Jakt M."/>
            <person name="Kanapin A."/>
            <person name="Katoh M."/>
            <person name="Kawasawa Y."/>
            <person name="Kelso J."/>
            <person name="Kitamura H."/>
            <person name="Kitano H."/>
            <person name="Kollias G."/>
            <person name="Krishnan S.P."/>
            <person name="Kruger A."/>
            <person name="Kummerfeld S.K."/>
            <person name="Kurochkin I.V."/>
            <person name="Lareau L.F."/>
            <person name="Lazarevic D."/>
            <person name="Lipovich L."/>
            <person name="Liu J."/>
            <person name="Liuni S."/>
            <person name="McWilliam S."/>
            <person name="Madan Babu M."/>
            <person name="Madera M."/>
            <person name="Marchionni L."/>
            <person name="Matsuda H."/>
            <person name="Matsuzawa S."/>
            <person name="Miki H."/>
            <person name="Mignone F."/>
            <person name="Miyake S."/>
            <person name="Morris K."/>
            <person name="Mottagui-Tabar S."/>
            <person name="Mulder N."/>
            <person name="Nakano N."/>
            <person name="Nakauchi H."/>
            <person name="Ng P."/>
            <person name="Nilsson R."/>
            <person name="Nishiguchi S."/>
            <person name="Nishikawa S."/>
            <person name="Nori F."/>
            <person name="Ohara O."/>
            <person name="Okazaki Y."/>
            <person name="Orlando V."/>
            <person name="Pang K.C."/>
            <person name="Pavan W.J."/>
            <person name="Pavesi G."/>
            <person name="Pesole G."/>
            <person name="Petrovsky N."/>
            <person name="Piazza S."/>
            <person name="Reed J."/>
            <person name="Reid J.F."/>
            <person name="Ring B.Z."/>
            <person name="Ringwald M."/>
            <person name="Rost B."/>
            <person name="Ruan Y."/>
            <person name="Salzberg S.L."/>
            <person name="Sandelin A."/>
            <person name="Schneider C."/>
            <person name="Schoenbach C."/>
            <person name="Sekiguchi K."/>
            <person name="Semple C.A."/>
            <person name="Seno S."/>
            <person name="Sessa L."/>
            <person name="Sheng Y."/>
            <person name="Shibata Y."/>
            <person name="Shimada H."/>
            <person name="Shimada K."/>
            <person name="Silva D."/>
            <person name="Sinclair B."/>
            <person name="Sperling S."/>
            <person name="Stupka E."/>
            <person name="Sugiura K."/>
            <person name="Sultana R."/>
            <person name="Takenaka Y."/>
            <person name="Taki K."/>
            <person name="Tammoja K."/>
            <person name="Tan S.L."/>
            <person name="Tang S."/>
            <person name="Taylor M.S."/>
            <person name="Tegner J."/>
            <person name="Teichmann S.A."/>
            <person name="Ueda H.R."/>
            <person name="van Nimwegen E."/>
            <person name="Verardo R."/>
            <person name="Wei C.L."/>
            <person name="Yagi K."/>
            <person name="Yamanishi H."/>
            <person name="Zabarovsky E."/>
            <person name="Zhu S."/>
            <person name="Zimmer A."/>
            <person name="Hide W."/>
            <person name="Bult C."/>
            <person name="Grimmond S.M."/>
            <person name="Teasdale R.D."/>
            <person name="Liu E.T."/>
            <person name="Brusic V."/>
            <person name="Quackenbush J."/>
            <person name="Wahlestedt C."/>
            <person name="Mattick J.S."/>
            <person name="Hume D.A."/>
            <person name="Kai C."/>
            <person name="Sasaki D."/>
            <person name="Tomaru Y."/>
            <person name="Fukuda S."/>
            <person name="Kanamori-Katayama M."/>
            <person name="Suzuki M."/>
            <person name="Aoki J."/>
            <person name="Arakawa T."/>
            <person name="Iida J."/>
            <person name="Imamura K."/>
            <person name="Itoh M."/>
            <person name="Kato T."/>
            <person name="Kawaji H."/>
            <person name="Kawagashira N."/>
            <person name="Kawashima T."/>
            <person name="Kojima M."/>
            <person name="Kondo S."/>
            <person name="Konno H."/>
            <person name="Nakano K."/>
            <person name="Ninomiya N."/>
            <person name="Nishio T."/>
            <person name="Okada M."/>
            <person name="Plessy C."/>
            <person name="Shibata K."/>
            <person name="Shiraki T."/>
            <person name="Suzuki S."/>
            <person name="Tagami M."/>
            <person name="Waki K."/>
            <person name="Watahiki A."/>
            <person name="Okamura-Oho Y."/>
            <person name="Suzuki H."/>
            <person name="Kawai J."/>
            <person name="Hayashizaki Y."/>
        </authorList>
    </citation>
    <scope>NUCLEOTIDE SEQUENCE [LARGE SCALE MRNA]</scope>
</reference>
<reference key="2">
    <citation type="journal article" date="2009" name="PLoS Biol.">
        <title>Lineage-specific biology revealed by a finished genome assembly of the mouse.</title>
        <authorList>
            <person name="Church D.M."/>
            <person name="Goodstadt L."/>
            <person name="Hillier L.W."/>
            <person name="Zody M.C."/>
            <person name="Goldstein S."/>
            <person name="She X."/>
            <person name="Bult C.J."/>
            <person name="Agarwala R."/>
            <person name="Cherry J.L."/>
            <person name="DiCuccio M."/>
            <person name="Hlavina W."/>
            <person name="Kapustin Y."/>
            <person name="Meric P."/>
            <person name="Maglott D."/>
            <person name="Birtle Z."/>
            <person name="Marques A.C."/>
            <person name="Graves T."/>
            <person name="Zhou S."/>
            <person name="Teague B."/>
            <person name="Potamousis K."/>
            <person name="Churas C."/>
            <person name="Place M."/>
            <person name="Herschleb J."/>
            <person name="Runnheim R."/>
            <person name="Forrest D."/>
            <person name="Amos-Landgraf J."/>
            <person name="Schwartz D.C."/>
            <person name="Cheng Z."/>
            <person name="Lindblad-Toh K."/>
            <person name="Eichler E.E."/>
            <person name="Ponting C.P."/>
        </authorList>
    </citation>
    <scope>NUCLEOTIDE SEQUENCE [LARGE SCALE GENOMIC DNA]</scope>
    <source>
        <strain>C57BL/6J</strain>
    </source>
</reference>
<organism>
    <name type="scientific">Mus musculus</name>
    <name type="common">Mouse</name>
    <dbReference type="NCBI Taxonomy" id="10090"/>
    <lineage>
        <taxon>Eukaryota</taxon>
        <taxon>Metazoa</taxon>
        <taxon>Chordata</taxon>
        <taxon>Craniata</taxon>
        <taxon>Vertebrata</taxon>
        <taxon>Euteleostomi</taxon>
        <taxon>Mammalia</taxon>
        <taxon>Eutheria</taxon>
        <taxon>Euarchontoglires</taxon>
        <taxon>Glires</taxon>
        <taxon>Rodentia</taxon>
        <taxon>Myomorpha</taxon>
        <taxon>Muroidea</taxon>
        <taxon>Muridae</taxon>
        <taxon>Murinae</taxon>
        <taxon>Mus</taxon>
        <taxon>Mus</taxon>
    </lineage>
</organism>
<protein>
    <recommendedName>
        <fullName evidence="2">Serine-rich and transmembrane domain-containing 2</fullName>
    </recommendedName>
</protein>
<feature type="chain" id="PRO_0000443424" description="Serine-rich and transmembrane domain-containing 2">
    <location>
        <begin position="1"/>
        <end position="89"/>
    </location>
</feature>
<feature type="transmembrane region" description="Helical" evidence="1">
    <location>
        <begin position="38"/>
        <end position="58"/>
    </location>
</feature>
<feature type="glycosylation site" description="N-linked (GlcNAc...) asparagine" evidence="1">
    <location>
        <position position="11"/>
    </location>
</feature>